<dbReference type="EMBL" id="CP000110">
    <property type="protein sequence ID" value="ABB36202.1"/>
    <property type="molecule type" value="Genomic_DNA"/>
</dbReference>
<dbReference type="RefSeq" id="WP_011365397.1">
    <property type="nucleotide sequence ID" value="NC_007516.1"/>
</dbReference>
<dbReference type="SMR" id="Q3AGT0"/>
<dbReference type="STRING" id="110662.Syncc9605_2470"/>
<dbReference type="KEGG" id="syd:Syncc9605_2470"/>
<dbReference type="eggNOG" id="COG0081">
    <property type="taxonomic scope" value="Bacteria"/>
</dbReference>
<dbReference type="HOGENOM" id="CLU_062853_0_0_3"/>
<dbReference type="OrthoDB" id="9803740at2"/>
<dbReference type="GO" id="GO:0015934">
    <property type="term" value="C:large ribosomal subunit"/>
    <property type="evidence" value="ECO:0007669"/>
    <property type="project" value="InterPro"/>
</dbReference>
<dbReference type="GO" id="GO:0019843">
    <property type="term" value="F:rRNA binding"/>
    <property type="evidence" value="ECO:0007669"/>
    <property type="project" value="UniProtKB-UniRule"/>
</dbReference>
<dbReference type="GO" id="GO:0003735">
    <property type="term" value="F:structural constituent of ribosome"/>
    <property type="evidence" value="ECO:0007669"/>
    <property type="project" value="InterPro"/>
</dbReference>
<dbReference type="GO" id="GO:0000049">
    <property type="term" value="F:tRNA binding"/>
    <property type="evidence" value="ECO:0007669"/>
    <property type="project" value="UniProtKB-KW"/>
</dbReference>
<dbReference type="GO" id="GO:0006417">
    <property type="term" value="P:regulation of translation"/>
    <property type="evidence" value="ECO:0007669"/>
    <property type="project" value="UniProtKB-KW"/>
</dbReference>
<dbReference type="GO" id="GO:0006412">
    <property type="term" value="P:translation"/>
    <property type="evidence" value="ECO:0007669"/>
    <property type="project" value="UniProtKB-UniRule"/>
</dbReference>
<dbReference type="CDD" id="cd00403">
    <property type="entry name" value="Ribosomal_L1"/>
    <property type="match status" value="1"/>
</dbReference>
<dbReference type="FunFam" id="3.40.50.790:FF:000001">
    <property type="entry name" value="50S ribosomal protein L1"/>
    <property type="match status" value="1"/>
</dbReference>
<dbReference type="Gene3D" id="3.30.190.20">
    <property type="match status" value="1"/>
</dbReference>
<dbReference type="Gene3D" id="3.40.50.790">
    <property type="match status" value="1"/>
</dbReference>
<dbReference type="HAMAP" id="MF_01318_B">
    <property type="entry name" value="Ribosomal_uL1_B"/>
    <property type="match status" value="1"/>
</dbReference>
<dbReference type="InterPro" id="IPR005878">
    <property type="entry name" value="Ribosom_uL1_bac-type"/>
</dbReference>
<dbReference type="InterPro" id="IPR002143">
    <property type="entry name" value="Ribosomal_uL1"/>
</dbReference>
<dbReference type="InterPro" id="IPR023674">
    <property type="entry name" value="Ribosomal_uL1-like"/>
</dbReference>
<dbReference type="InterPro" id="IPR028364">
    <property type="entry name" value="Ribosomal_uL1/biogenesis"/>
</dbReference>
<dbReference type="InterPro" id="IPR016095">
    <property type="entry name" value="Ribosomal_uL1_3-a/b-sand"/>
</dbReference>
<dbReference type="InterPro" id="IPR023673">
    <property type="entry name" value="Ribosomal_uL1_CS"/>
</dbReference>
<dbReference type="NCBIfam" id="TIGR01169">
    <property type="entry name" value="rplA_bact"/>
    <property type="match status" value="1"/>
</dbReference>
<dbReference type="PANTHER" id="PTHR36427">
    <property type="entry name" value="54S RIBOSOMAL PROTEIN L1, MITOCHONDRIAL"/>
    <property type="match status" value="1"/>
</dbReference>
<dbReference type="PANTHER" id="PTHR36427:SF3">
    <property type="entry name" value="LARGE RIBOSOMAL SUBUNIT PROTEIN UL1M"/>
    <property type="match status" value="1"/>
</dbReference>
<dbReference type="Pfam" id="PF00687">
    <property type="entry name" value="Ribosomal_L1"/>
    <property type="match status" value="1"/>
</dbReference>
<dbReference type="PIRSF" id="PIRSF002155">
    <property type="entry name" value="Ribosomal_L1"/>
    <property type="match status" value="1"/>
</dbReference>
<dbReference type="SUPFAM" id="SSF56808">
    <property type="entry name" value="Ribosomal protein L1"/>
    <property type="match status" value="1"/>
</dbReference>
<dbReference type="PROSITE" id="PS01199">
    <property type="entry name" value="RIBOSOMAL_L1"/>
    <property type="match status" value="1"/>
</dbReference>
<gene>
    <name evidence="1" type="primary">rplA</name>
    <name evidence="1" type="synonym">rpl1</name>
    <name type="ordered locus">Syncc9605_2470</name>
</gene>
<organism>
    <name type="scientific">Synechococcus sp. (strain CC9605)</name>
    <dbReference type="NCBI Taxonomy" id="110662"/>
    <lineage>
        <taxon>Bacteria</taxon>
        <taxon>Bacillati</taxon>
        <taxon>Cyanobacteriota</taxon>
        <taxon>Cyanophyceae</taxon>
        <taxon>Synechococcales</taxon>
        <taxon>Synechococcaceae</taxon>
        <taxon>Synechococcus</taxon>
    </lineage>
</organism>
<name>RL1_SYNSC</name>
<reference key="1">
    <citation type="submission" date="2005-07" db="EMBL/GenBank/DDBJ databases">
        <title>Complete sequence of Synechococcus sp. CC9605.</title>
        <authorList>
            <consortium name="US DOE Joint Genome Institute"/>
            <person name="Copeland A."/>
            <person name="Lucas S."/>
            <person name="Lapidus A."/>
            <person name="Barry K."/>
            <person name="Detter J.C."/>
            <person name="Glavina T."/>
            <person name="Hammon N."/>
            <person name="Israni S."/>
            <person name="Pitluck S."/>
            <person name="Schmutz J."/>
            <person name="Martinez M."/>
            <person name="Larimer F."/>
            <person name="Land M."/>
            <person name="Kyrpides N."/>
            <person name="Ivanova N."/>
            <person name="Richardson P."/>
        </authorList>
    </citation>
    <scope>NUCLEOTIDE SEQUENCE [LARGE SCALE GENOMIC DNA]</scope>
    <source>
        <strain>CC9605</strain>
    </source>
</reference>
<evidence type="ECO:0000255" key="1">
    <source>
        <dbReference type="HAMAP-Rule" id="MF_01318"/>
    </source>
</evidence>
<evidence type="ECO:0000305" key="2"/>
<comment type="function">
    <text evidence="1">Binds directly to 23S rRNA. The L1 stalk is quite mobile in the ribosome, and is involved in E site tRNA release.</text>
</comment>
<comment type="function">
    <text evidence="1">Protein L1 is also a translational repressor protein, it controls the translation of the L11 operon by binding to its mRNA.</text>
</comment>
<comment type="subunit">
    <text evidence="1">Part of the 50S ribosomal subunit.</text>
</comment>
<comment type="similarity">
    <text evidence="1">Belongs to the universal ribosomal protein uL1 family.</text>
</comment>
<proteinExistence type="inferred from homology"/>
<protein>
    <recommendedName>
        <fullName evidence="1">Large ribosomal subunit protein uL1</fullName>
    </recommendedName>
    <alternativeName>
        <fullName evidence="2">50S ribosomal protein L1</fullName>
    </alternativeName>
</protein>
<sequence>MPKISKRLASLAGKIEDRAYAPLEAIALVKDNANAKFDETMEAHVRLGIDPKYTDQQLRTTVALPNGTGQSVRIAVVTRGEKVAEAKAAGAELAGEEDLVESISKGEMDFDLLIATPDMMPKVAKLGRVLGPRGLMPNPKAGTVTTDLEAAIKEFKAGKLEFRADRTGIVHVRFGKASFSADALLQNLKTLQETIDRNKPSGAKGRYWKSLYVTSTMGPSVEVDFSALQDIEQGS</sequence>
<accession>Q3AGT0</accession>
<feature type="chain" id="PRO_0000308125" description="Large ribosomal subunit protein uL1">
    <location>
        <begin position="1"/>
        <end position="235"/>
    </location>
</feature>
<keyword id="KW-0678">Repressor</keyword>
<keyword id="KW-0687">Ribonucleoprotein</keyword>
<keyword id="KW-0689">Ribosomal protein</keyword>
<keyword id="KW-0694">RNA-binding</keyword>
<keyword id="KW-0699">rRNA-binding</keyword>
<keyword id="KW-0810">Translation regulation</keyword>
<keyword id="KW-0820">tRNA-binding</keyword>